<name>CATR_TETST</name>
<protein>
    <recommendedName>
        <fullName>Caltractin</fullName>
    </recommendedName>
    <alternativeName>
        <fullName>Centrin</fullName>
    </alternativeName>
</protein>
<reference key="1">
    <citation type="journal article" date="1993" name="Plant Mol. Biol.">
        <title>Molecular cloning and evolutionary analysis of the calcium-modulated contractile protein, centrin, in green algae and land plants.</title>
        <authorList>
            <person name="Bhattacharya D."/>
            <person name="Steinkoetter J."/>
            <person name="Melkonian M."/>
        </authorList>
    </citation>
    <scope>NUCLEOTIDE SEQUENCE [MRNA]</scope>
</reference>
<organism>
    <name type="scientific">Tetraselmis striata</name>
    <name type="common">Green microalga</name>
    <dbReference type="NCBI Taxonomy" id="3165"/>
    <lineage>
        <taxon>Eukaryota</taxon>
        <taxon>Viridiplantae</taxon>
        <taxon>Chlorophyta</taxon>
        <taxon>core chlorophytes</taxon>
        <taxon>Chlorodendrophyceae</taxon>
        <taxon>Chlorodendrales</taxon>
        <taxon>Chlorodendraceae</taxon>
        <taxon>Tetraselmis</taxon>
    </lineage>
</organism>
<accession>P43646</accession>
<evidence type="ECO:0000255" key="1">
    <source>
        <dbReference type="PROSITE-ProRule" id="PRU00448"/>
    </source>
</evidence>
<evidence type="ECO:0000305" key="2"/>
<sequence>LTEEQKQDIREAFDLFDTDGSGTIDAKELKVAMRALGFEPKKEEIKKMIADIDKDGSGTIDFEEFLQMMTAKMGERDSREEIMKAFRLFDDDETGKISFKNLKRVAKELGENMTDEELQEMIDEADRDGDGEVNEEEFFRIMKKTSLF</sequence>
<dbReference type="EMBL" id="X70693">
    <property type="status" value="NOT_ANNOTATED_CDS"/>
    <property type="molecule type" value="mRNA"/>
</dbReference>
<dbReference type="SMR" id="P43646"/>
<dbReference type="GO" id="GO:0016460">
    <property type="term" value="C:myosin II complex"/>
    <property type="evidence" value="ECO:0007669"/>
    <property type="project" value="TreeGrafter"/>
</dbReference>
<dbReference type="GO" id="GO:0005509">
    <property type="term" value="F:calcium ion binding"/>
    <property type="evidence" value="ECO:0007669"/>
    <property type="project" value="InterPro"/>
</dbReference>
<dbReference type="GO" id="GO:0051301">
    <property type="term" value="P:cell division"/>
    <property type="evidence" value="ECO:0007669"/>
    <property type="project" value="UniProtKB-KW"/>
</dbReference>
<dbReference type="CDD" id="cd00051">
    <property type="entry name" value="EFh"/>
    <property type="match status" value="1"/>
</dbReference>
<dbReference type="FunFam" id="1.10.238.10:FF:000077">
    <property type="entry name" value="Centrin 1"/>
    <property type="match status" value="1"/>
</dbReference>
<dbReference type="FunFam" id="1.10.238.10:FF:000070">
    <property type="entry name" value="Centrin-1"/>
    <property type="match status" value="1"/>
</dbReference>
<dbReference type="Gene3D" id="1.10.238.10">
    <property type="entry name" value="EF-hand"/>
    <property type="match status" value="2"/>
</dbReference>
<dbReference type="InterPro" id="IPR050230">
    <property type="entry name" value="CALM/Myosin/TropC-like"/>
</dbReference>
<dbReference type="InterPro" id="IPR011992">
    <property type="entry name" value="EF-hand-dom_pair"/>
</dbReference>
<dbReference type="InterPro" id="IPR018247">
    <property type="entry name" value="EF_Hand_1_Ca_BS"/>
</dbReference>
<dbReference type="InterPro" id="IPR002048">
    <property type="entry name" value="EF_hand_dom"/>
</dbReference>
<dbReference type="InterPro" id="IPR000629">
    <property type="entry name" value="RNA-helicase_DEAD-box_CS"/>
</dbReference>
<dbReference type="PANTHER" id="PTHR23048:SF59">
    <property type="entry name" value="EF-HAND SUPERFAMILY PROTEIN"/>
    <property type="match status" value="1"/>
</dbReference>
<dbReference type="PANTHER" id="PTHR23048">
    <property type="entry name" value="MYOSIN LIGHT CHAIN 1, 3"/>
    <property type="match status" value="1"/>
</dbReference>
<dbReference type="Pfam" id="PF13499">
    <property type="entry name" value="EF-hand_7"/>
    <property type="match status" value="2"/>
</dbReference>
<dbReference type="SMART" id="SM00054">
    <property type="entry name" value="EFh"/>
    <property type="match status" value="4"/>
</dbReference>
<dbReference type="SUPFAM" id="SSF47473">
    <property type="entry name" value="EF-hand"/>
    <property type="match status" value="1"/>
</dbReference>
<dbReference type="PROSITE" id="PS00018">
    <property type="entry name" value="EF_HAND_1"/>
    <property type="match status" value="3"/>
</dbReference>
<dbReference type="PROSITE" id="PS50222">
    <property type="entry name" value="EF_HAND_2"/>
    <property type="match status" value="4"/>
</dbReference>
<feature type="chain" id="PRO_0000073575" description="Caltractin">
    <location>
        <begin position="1" status="less than"/>
        <end position="148"/>
    </location>
</feature>
<feature type="domain" description="EF-hand 1" evidence="1">
    <location>
        <begin position="4"/>
        <end position="39"/>
    </location>
</feature>
<feature type="domain" description="EF-hand 2" evidence="1">
    <location>
        <begin position="40"/>
        <end position="75"/>
    </location>
</feature>
<feature type="domain" description="EF-hand 3" evidence="1">
    <location>
        <begin position="77"/>
        <end position="112"/>
    </location>
</feature>
<feature type="domain" description="EF-hand 4" evidence="1">
    <location>
        <begin position="113"/>
        <end position="148"/>
    </location>
</feature>
<feature type="binding site" evidence="1">
    <location>
        <position position="17"/>
    </location>
    <ligand>
        <name>Ca(2+)</name>
        <dbReference type="ChEBI" id="CHEBI:29108"/>
        <label>1</label>
    </ligand>
</feature>
<feature type="binding site" evidence="1">
    <location>
        <position position="19"/>
    </location>
    <ligand>
        <name>Ca(2+)</name>
        <dbReference type="ChEBI" id="CHEBI:29108"/>
        <label>1</label>
    </ligand>
</feature>
<feature type="binding site" evidence="1">
    <location>
        <position position="21"/>
    </location>
    <ligand>
        <name>Ca(2+)</name>
        <dbReference type="ChEBI" id="CHEBI:29108"/>
        <label>1</label>
    </ligand>
</feature>
<feature type="binding site" evidence="1">
    <location>
        <position position="23"/>
    </location>
    <ligand>
        <name>Ca(2+)</name>
        <dbReference type="ChEBI" id="CHEBI:29108"/>
        <label>1</label>
    </ligand>
</feature>
<feature type="binding site" evidence="1">
    <location>
        <position position="28"/>
    </location>
    <ligand>
        <name>Ca(2+)</name>
        <dbReference type="ChEBI" id="CHEBI:29108"/>
        <label>1</label>
    </ligand>
</feature>
<feature type="binding site" evidence="1">
    <location>
        <position position="53"/>
    </location>
    <ligand>
        <name>Ca(2+)</name>
        <dbReference type="ChEBI" id="CHEBI:29108"/>
        <label>2</label>
    </ligand>
</feature>
<feature type="binding site" evidence="1">
    <location>
        <position position="55"/>
    </location>
    <ligand>
        <name>Ca(2+)</name>
        <dbReference type="ChEBI" id="CHEBI:29108"/>
        <label>2</label>
    </ligand>
</feature>
<feature type="binding site" evidence="1">
    <location>
        <position position="57"/>
    </location>
    <ligand>
        <name>Ca(2+)</name>
        <dbReference type="ChEBI" id="CHEBI:29108"/>
        <label>2</label>
    </ligand>
</feature>
<feature type="binding site" evidence="1">
    <location>
        <position position="59"/>
    </location>
    <ligand>
        <name>Ca(2+)</name>
        <dbReference type="ChEBI" id="CHEBI:29108"/>
        <label>2</label>
    </ligand>
</feature>
<feature type="binding site" evidence="1">
    <location>
        <position position="64"/>
    </location>
    <ligand>
        <name>Ca(2+)</name>
        <dbReference type="ChEBI" id="CHEBI:29108"/>
        <label>2</label>
    </ligand>
</feature>
<feature type="binding site" evidence="1">
    <location>
        <position position="126"/>
    </location>
    <ligand>
        <name>Ca(2+)</name>
        <dbReference type="ChEBI" id="CHEBI:29108"/>
        <label>3</label>
    </ligand>
</feature>
<feature type="binding site" evidence="1">
    <location>
        <position position="128"/>
    </location>
    <ligand>
        <name>Ca(2+)</name>
        <dbReference type="ChEBI" id="CHEBI:29108"/>
        <label>3</label>
    </ligand>
</feature>
<feature type="binding site" evidence="1">
    <location>
        <position position="130"/>
    </location>
    <ligand>
        <name>Ca(2+)</name>
        <dbReference type="ChEBI" id="CHEBI:29108"/>
        <label>3</label>
    </ligand>
</feature>
<feature type="binding site" evidence="1">
    <location>
        <position position="132"/>
    </location>
    <ligand>
        <name>Ca(2+)</name>
        <dbReference type="ChEBI" id="CHEBI:29108"/>
        <label>3</label>
    </ligand>
</feature>
<feature type="binding site" evidence="1">
    <location>
        <position position="137"/>
    </location>
    <ligand>
        <name>Ca(2+)</name>
        <dbReference type="ChEBI" id="CHEBI:29108"/>
        <label>3</label>
    </ligand>
</feature>
<feature type="non-terminal residue">
    <location>
        <position position="1"/>
    </location>
</feature>
<proteinExistence type="evidence at transcript level"/>
<keyword id="KW-0106">Calcium</keyword>
<keyword id="KW-0131">Cell cycle</keyword>
<keyword id="KW-0132">Cell division</keyword>
<keyword id="KW-0479">Metal-binding</keyword>
<keyword id="KW-0498">Mitosis</keyword>
<keyword id="KW-0677">Repeat</keyword>
<comment type="function">
    <text>This calcium-binding protein is found in the basal body complexes (the functional homolog of the centrosome in animal cell). In mitotic cells it is specifically associated with the poles of the mitotic spindles at the sites of the duplicated basal body complexes.</text>
</comment>
<comment type="tissue specificity">
    <text>Ubiquitous.</text>
</comment>
<comment type="similarity">
    <text evidence="2">Belongs to the centrin family.</text>
</comment>